<keyword id="KW-0150">Chloroplast</keyword>
<keyword id="KW-0472">Membrane</keyword>
<keyword id="KW-0934">Plastid</keyword>
<keyword id="KW-0793">Thylakoid</keyword>
<keyword id="KW-0812">Transmembrane</keyword>
<keyword id="KW-1133">Transmembrane helix</keyword>
<proteinExistence type="inferred from homology"/>
<reference key="1">
    <citation type="submission" date="2000-02" db="EMBL/GenBank/DDBJ databases">
        <title>Long branches in the seed plants and the root of the angiosperms.</title>
        <authorList>
            <person name="Graham S.W."/>
            <person name="Reeves P.A."/>
            <person name="Burns A."/>
            <person name="Olmstead R.G."/>
        </authorList>
    </citation>
    <scope>NUCLEOTIDE SEQUENCE [GENOMIC DNA]</scope>
</reference>
<comment type="function">
    <text evidence="1">May play a role in photosystem I and II biogenesis.</text>
</comment>
<comment type="subcellular location">
    <subcellularLocation>
        <location evidence="1">Plastid</location>
        <location evidence="1">Chloroplast thylakoid membrane</location>
        <topology evidence="1">Single-pass membrane protein</topology>
    </subcellularLocation>
</comment>
<comment type="similarity">
    <text evidence="1">Belongs to the PsbN family.</text>
</comment>
<comment type="caution">
    <text evidence="1">Originally thought to be a component of PSII; based on experiments in Synechocystis, N.tabacum and barley, and its absence from PSII in T.elongatus and T.vulcanus, this is probably not true.</text>
</comment>
<gene>
    <name evidence="1" type="primary">psbN</name>
</gene>
<sequence length="43" mass="4723">METATLVAIFISGLLVSFTGYALYTAFGQPSEQLRDPFEEHGD</sequence>
<evidence type="ECO:0000255" key="1">
    <source>
        <dbReference type="HAMAP-Rule" id="MF_00293"/>
    </source>
</evidence>
<protein>
    <recommendedName>
        <fullName evidence="1">Protein PsbN</fullName>
    </recommendedName>
</protein>
<name>PSBN_SAGLA</name>
<feature type="chain" id="PRO_0000207948" description="Protein PsbN">
    <location>
        <begin position="1"/>
        <end position="43"/>
    </location>
</feature>
<feature type="transmembrane region" description="Helical" evidence="1">
    <location>
        <begin position="7"/>
        <end position="27"/>
    </location>
</feature>
<accession>Q8HS19</accession>
<dbReference type="EMBL" id="AY007469">
    <property type="protein sequence ID" value="AAG12389.1"/>
    <property type="molecule type" value="Genomic_DNA"/>
</dbReference>
<dbReference type="SMR" id="Q8HS19"/>
<dbReference type="GO" id="GO:0009535">
    <property type="term" value="C:chloroplast thylakoid membrane"/>
    <property type="evidence" value="ECO:0007669"/>
    <property type="project" value="UniProtKB-SubCell"/>
</dbReference>
<dbReference type="GO" id="GO:0015979">
    <property type="term" value="P:photosynthesis"/>
    <property type="evidence" value="ECO:0007669"/>
    <property type="project" value="InterPro"/>
</dbReference>
<dbReference type="HAMAP" id="MF_00293">
    <property type="entry name" value="PSII_PsbN"/>
    <property type="match status" value="1"/>
</dbReference>
<dbReference type="InterPro" id="IPR003398">
    <property type="entry name" value="PSII_PsbN"/>
</dbReference>
<dbReference type="PANTHER" id="PTHR35326">
    <property type="entry name" value="PROTEIN PSBN"/>
    <property type="match status" value="1"/>
</dbReference>
<dbReference type="PANTHER" id="PTHR35326:SF3">
    <property type="entry name" value="PROTEIN PSBN"/>
    <property type="match status" value="1"/>
</dbReference>
<dbReference type="Pfam" id="PF02468">
    <property type="entry name" value="PsbN"/>
    <property type="match status" value="1"/>
</dbReference>
<organism>
    <name type="scientific">Sagittaria latifolia</name>
    <name type="common">Broadleaf arrowhead</name>
    <name type="synonym">Sagittaria chinensis</name>
    <dbReference type="NCBI Taxonomy" id="15008"/>
    <lineage>
        <taxon>Eukaryota</taxon>
        <taxon>Viridiplantae</taxon>
        <taxon>Streptophyta</taxon>
        <taxon>Embryophyta</taxon>
        <taxon>Tracheophyta</taxon>
        <taxon>Spermatophyta</taxon>
        <taxon>Magnoliopsida</taxon>
        <taxon>Liliopsida</taxon>
        <taxon>Alismataceae</taxon>
        <taxon>Sagittaria</taxon>
    </lineage>
</organism>
<geneLocation type="chloroplast"/>